<name>PP408_ARATH</name>
<evidence type="ECO:0000255" key="1"/>
<evidence type="ECO:0000305" key="2"/>
<organism>
    <name type="scientific">Arabidopsis thaliana</name>
    <name type="common">Mouse-ear cress</name>
    <dbReference type="NCBI Taxonomy" id="3702"/>
    <lineage>
        <taxon>Eukaryota</taxon>
        <taxon>Viridiplantae</taxon>
        <taxon>Streptophyta</taxon>
        <taxon>Embryophyta</taxon>
        <taxon>Tracheophyta</taxon>
        <taxon>Spermatophyta</taxon>
        <taxon>Magnoliopsida</taxon>
        <taxon>eudicotyledons</taxon>
        <taxon>Gunneridae</taxon>
        <taxon>Pentapetalae</taxon>
        <taxon>rosids</taxon>
        <taxon>malvids</taxon>
        <taxon>Brassicales</taxon>
        <taxon>Brassicaceae</taxon>
        <taxon>Camelineae</taxon>
        <taxon>Arabidopsis</taxon>
    </lineage>
</organism>
<gene>
    <name type="ordered locus">At5g39980</name>
    <name type="ORF">MYH19.18</name>
</gene>
<keyword id="KW-0150">Chloroplast</keyword>
<keyword id="KW-0934">Plastid</keyword>
<keyword id="KW-1185">Reference proteome</keyword>
<keyword id="KW-0677">Repeat</keyword>
<keyword id="KW-0809">Transit peptide</keyword>
<sequence length="678" mass="78273">MYIEIASSSSLSLPLLPLTRPHIYTSIPFSTIPEARQRNLIFTVSASSSSESTQNKKVWRKQPEKNTTSSFQALRKHRRYQRSAFLDHNVDMDELLASIHQTQNEKELFSLLSTYKDRQLSIRFMVSLLSRENDWQRSLALLDWVHEEAKYTPSVFAYNVVLRNVLRAKQFDIAHGLFDEMRQRALAPDRYTYSTLITSFGKEGMFDSALSWLQKMEQDRVSGDLVLYSNLIELSRRLCDYSKAISIFSRLKRSGITPDLVAYNSMINVYGKAKLFREARLLIKEMNEAGVLPNTVSYSTLLSVYVENHKFLEALSVFAEMKEVNCALDLTTCNIMIDVYGQLDMVKEADRLFWSLRKMDIEPNVVSYNTILRVYGEAELFGEAIHLFRLMQRKDIEQNVVTYNTMIKIYGKTMEHEKATNLVQEMQSRGIEPNAITYSTIISIWGKAGKLDRAATLFQKLRSSGVEIDQVLYQTMIVAYERVGLMGHAKRLLHELKLPDNIPRETAITILAKAGRTEEATWVFRQAFESGEVKDISVFGCMINLYSRNQRYVNVIEVFEKMRTAGYFPDSNVIAMVLNAYGKQREFEKADTVYREMQEEGCVFPDEVHFQMLSLYSSKKDFEMVESLFQRLESDPNVNSKELHLVVAALYERADKLNDASRVMNRMRERGILKPFPG</sequence>
<dbReference type="EMBL" id="AB010077">
    <property type="protein sequence ID" value="BAB10222.1"/>
    <property type="molecule type" value="Genomic_DNA"/>
</dbReference>
<dbReference type="EMBL" id="CP002688">
    <property type="protein sequence ID" value="AED94498.1"/>
    <property type="molecule type" value="Genomic_DNA"/>
</dbReference>
<dbReference type="EMBL" id="AK226241">
    <property type="protein sequence ID" value="BAE98404.1"/>
    <property type="molecule type" value="mRNA"/>
</dbReference>
<dbReference type="RefSeq" id="NP_198814.1">
    <property type="nucleotide sequence ID" value="NM_123361.2"/>
</dbReference>
<dbReference type="SMR" id="Q9FLD8"/>
<dbReference type="FunCoup" id="Q9FLD8">
    <property type="interactions" value="655"/>
</dbReference>
<dbReference type="iPTMnet" id="Q9FLD8"/>
<dbReference type="PaxDb" id="3702-AT5G39980.1"/>
<dbReference type="ProteomicsDB" id="249289"/>
<dbReference type="EnsemblPlants" id="AT5G39980.1">
    <property type="protein sequence ID" value="AT5G39980.1"/>
    <property type="gene ID" value="AT5G39980"/>
</dbReference>
<dbReference type="GeneID" id="833995"/>
<dbReference type="Gramene" id="AT5G39980.1">
    <property type="protein sequence ID" value="AT5G39980.1"/>
    <property type="gene ID" value="AT5G39980"/>
</dbReference>
<dbReference type="KEGG" id="ath:AT5G39980"/>
<dbReference type="Araport" id="AT5G39980"/>
<dbReference type="TAIR" id="AT5G39980">
    <property type="gene designation" value="EMB3140"/>
</dbReference>
<dbReference type="eggNOG" id="KOG4197">
    <property type="taxonomic scope" value="Eukaryota"/>
</dbReference>
<dbReference type="HOGENOM" id="CLU_002706_49_16_1"/>
<dbReference type="InParanoid" id="Q9FLD8"/>
<dbReference type="OMA" id="MSPYKGR"/>
<dbReference type="PhylomeDB" id="Q9FLD8"/>
<dbReference type="PRO" id="PR:Q9FLD8"/>
<dbReference type="Proteomes" id="UP000006548">
    <property type="component" value="Chromosome 5"/>
</dbReference>
<dbReference type="ExpressionAtlas" id="Q9FLD8">
    <property type="expression patterns" value="baseline and differential"/>
</dbReference>
<dbReference type="GO" id="GO:0009941">
    <property type="term" value="C:chloroplast envelope"/>
    <property type="evidence" value="ECO:0000314"/>
    <property type="project" value="TAIR"/>
</dbReference>
<dbReference type="GO" id="GO:0009570">
    <property type="term" value="C:chloroplast stroma"/>
    <property type="evidence" value="ECO:0000314"/>
    <property type="project" value="TAIR"/>
</dbReference>
<dbReference type="GO" id="GO:0003729">
    <property type="term" value="F:mRNA binding"/>
    <property type="evidence" value="ECO:0000314"/>
    <property type="project" value="TAIR"/>
</dbReference>
<dbReference type="GO" id="GO:0009658">
    <property type="term" value="P:chloroplast organization"/>
    <property type="evidence" value="ECO:0000315"/>
    <property type="project" value="TAIR"/>
</dbReference>
<dbReference type="GO" id="GO:0031425">
    <property type="term" value="P:chloroplast RNA processing"/>
    <property type="evidence" value="ECO:0000315"/>
    <property type="project" value="TAIR"/>
</dbReference>
<dbReference type="FunFam" id="1.25.40.10:FF:000507">
    <property type="entry name" value="Pentatricopeptide repeat-containing protein"/>
    <property type="match status" value="1"/>
</dbReference>
<dbReference type="FunFam" id="1.25.40.10:FF:001829">
    <property type="entry name" value="Pentatricopeptide repeat-containing protein At5g39980, chloroplastic"/>
    <property type="match status" value="1"/>
</dbReference>
<dbReference type="FunFam" id="1.25.40.10:FF:000770">
    <property type="entry name" value="pentatricopeptide repeat-containing protein At5g39980, chloroplastic"/>
    <property type="match status" value="1"/>
</dbReference>
<dbReference type="Gene3D" id="1.25.40.10">
    <property type="entry name" value="Tetratricopeptide repeat domain"/>
    <property type="match status" value="4"/>
</dbReference>
<dbReference type="InterPro" id="IPR002885">
    <property type="entry name" value="Pentatricopeptide_rpt"/>
</dbReference>
<dbReference type="InterPro" id="IPR051222">
    <property type="entry name" value="PPR/CCM1_RNA-binding"/>
</dbReference>
<dbReference type="InterPro" id="IPR011990">
    <property type="entry name" value="TPR-like_helical_dom_sf"/>
</dbReference>
<dbReference type="NCBIfam" id="TIGR00756">
    <property type="entry name" value="PPR"/>
    <property type="match status" value="10"/>
</dbReference>
<dbReference type="PANTHER" id="PTHR47942:SF63">
    <property type="entry name" value="PENTATRICOPEPTIDE REPEAT-CONTAINING PROTEIN"/>
    <property type="match status" value="1"/>
</dbReference>
<dbReference type="PANTHER" id="PTHR47942">
    <property type="entry name" value="TETRATRICOPEPTIDE REPEAT (TPR)-LIKE SUPERFAMILY PROTEIN-RELATED"/>
    <property type="match status" value="1"/>
</dbReference>
<dbReference type="Pfam" id="PF01535">
    <property type="entry name" value="PPR"/>
    <property type="match status" value="4"/>
</dbReference>
<dbReference type="Pfam" id="PF13041">
    <property type="entry name" value="PPR_2"/>
    <property type="match status" value="4"/>
</dbReference>
<dbReference type="SUPFAM" id="SSF81901">
    <property type="entry name" value="HCP-like"/>
    <property type="match status" value="1"/>
</dbReference>
<dbReference type="PROSITE" id="PS51375">
    <property type="entry name" value="PPR"/>
    <property type="match status" value="13"/>
</dbReference>
<accession>Q9FLD8</accession>
<accession>Q0WWU4</accession>
<feature type="transit peptide" description="Chloroplast" evidence="1">
    <location>
        <begin position="1"/>
        <end position="64"/>
    </location>
</feature>
<feature type="chain" id="PRO_0000363545" description="Pentatricopeptide repeat-containing protein At5g39980, chloroplastic">
    <location>
        <begin position="65"/>
        <end position="678"/>
    </location>
</feature>
<feature type="repeat" description="PPR 1">
    <location>
        <begin position="154"/>
        <end position="188"/>
    </location>
</feature>
<feature type="repeat" description="PPR 2">
    <location>
        <begin position="189"/>
        <end position="223"/>
    </location>
</feature>
<feature type="repeat" description="PPR 3">
    <location>
        <begin position="224"/>
        <end position="258"/>
    </location>
</feature>
<feature type="repeat" description="PPR 4">
    <location>
        <begin position="259"/>
        <end position="293"/>
    </location>
</feature>
<feature type="repeat" description="PPR 5">
    <location>
        <begin position="294"/>
        <end position="328"/>
    </location>
</feature>
<feature type="repeat" description="PPR 6">
    <location>
        <begin position="329"/>
        <end position="363"/>
    </location>
</feature>
<feature type="repeat" description="PPR 7">
    <location>
        <begin position="364"/>
        <end position="398"/>
    </location>
</feature>
<feature type="repeat" description="PPR 8">
    <location>
        <begin position="399"/>
        <end position="433"/>
    </location>
</feature>
<feature type="repeat" description="PPR 9">
    <location>
        <begin position="434"/>
        <end position="468"/>
    </location>
</feature>
<feature type="repeat" description="PPR 10">
    <location>
        <begin position="469"/>
        <end position="503"/>
    </location>
</feature>
<feature type="repeat" description="PPR 11">
    <location>
        <begin position="535"/>
        <end position="569"/>
    </location>
</feature>
<feature type="repeat" description="PPR 12">
    <location>
        <begin position="570"/>
        <end position="604"/>
    </location>
</feature>
<feature type="repeat" description="PPR 13">
    <location>
        <begin position="605"/>
        <end position="638"/>
    </location>
</feature>
<feature type="repeat" description="PPR 14">
    <location>
        <begin position="639"/>
        <end position="674"/>
    </location>
</feature>
<reference key="1">
    <citation type="journal article" date="1998" name="DNA Res.">
        <title>Structural analysis of Arabidopsis thaliana chromosome 5. IV. Sequence features of the regions of 1,456,315 bp covered by nineteen physically assigned P1 and TAC clones.</title>
        <authorList>
            <person name="Sato S."/>
            <person name="Kaneko T."/>
            <person name="Kotani H."/>
            <person name="Nakamura Y."/>
            <person name="Asamizu E."/>
            <person name="Miyajima N."/>
            <person name="Tabata S."/>
        </authorList>
    </citation>
    <scope>NUCLEOTIDE SEQUENCE [LARGE SCALE GENOMIC DNA]</scope>
    <source>
        <strain>cv. Columbia</strain>
    </source>
</reference>
<reference key="2">
    <citation type="journal article" date="2017" name="Plant J.">
        <title>Araport11: a complete reannotation of the Arabidopsis thaliana reference genome.</title>
        <authorList>
            <person name="Cheng C.Y."/>
            <person name="Krishnakumar V."/>
            <person name="Chan A.P."/>
            <person name="Thibaud-Nissen F."/>
            <person name="Schobel S."/>
            <person name="Town C.D."/>
        </authorList>
    </citation>
    <scope>GENOME REANNOTATION</scope>
    <source>
        <strain>cv. Columbia</strain>
    </source>
</reference>
<reference key="3">
    <citation type="submission" date="2006-07" db="EMBL/GenBank/DDBJ databases">
        <title>Large-scale analysis of RIKEN Arabidopsis full-length (RAFL) cDNAs.</title>
        <authorList>
            <person name="Totoki Y."/>
            <person name="Seki M."/>
            <person name="Ishida J."/>
            <person name="Nakajima M."/>
            <person name="Enju A."/>
            <person name="Kamiya A."/>
            <person name="Narusaka M."/>
            <person name="Shin-i T."/>
            <person name="Nakagawa M."/>
            <person name="Sakamoto N."/>
            <person name="Oishi K."/>
            <person name="Kohara Y."/>
            <person name="Kobayashi M."/>
            <person name="Toyoda A."/>
            <person name="Sakaki Y."/>
            <person name="Sakurai T."/>
            <person name="Iida K."/>
            <person name="Akiyama K."/>
            <person name="Satou M."/>
            <person name="Toyoda T."/>
            <person name="Konagaya A."/>
            <person name="Carninci P."/>
            <person name="Kawai J."/>
            <person name="Hayashizaki Y."/>
            <person name="Shinozaki K."/>
        </authorList>
    </citation>
    <scope>NUCLEOTIDE SEQUENCE [LARGE SCALE MRNA] OF 133-678</scope>
    <source>
        <strain>cv. Columbia</strain>
    </source>
</reference>
<reference key="4">
    <citation type="journal article" date="2004" name="Plant Cell">
        <title>Genome-wide analysis of Arabidopsis pentatricopeptide repeat proteins reveals their essential role in organelle biogenesis.</title>
        <authorList>
            <person name="Lurin C."/>
            <person name="Andres C."/>
            <person name="Aubourg S."/>
            <person name="Bellaoui M."/>
            <person name="Bitton F."/>
            <person name="Bruyere C."/>
            <person name="Caboche M."/>
            <person name="Debast C."/>
            <person name="Gualberto J."/>
            <person name="Hoffmann B."/>
            <person name="Lecharny A."/>
            <person name="Le Ret M."/>
            <person name="Martin-Magniette M.-L."/>
            <person name="Mireau H."/>
            <person name="Peeters N."/>
            <person name="Renou J.-P."/>
            <person name="Szurek B."/>
            <person name="Taconnat L."/>
            <person name="Small I."/>
        </authorList>
    </citation>
    <scope>GENE FAMILY</scope>
</reference>
<proteinExistence type="evidence at transcript level"/>
<protein>
    <recommendedName>
        <fullName>Pentatricopeptide repeat-containing protein At5g39980, chloroplastic</fullName>
    </recommendedName>
</protein>
<comment type="subcellular location">
    <subcellularLocation>
        <location evidence="2">Plastid</location>
        <location evidence="2">Chloroplast</location>
    </subcellularLocation>
</comment>
<comment type="similarity">
    <text evidence="2">Belongs to the PPR family. P subfamily.</text>
</comment>
<comment type="online information" name="Pentatricopeptide repeat proteins">
    <link uri="https://ppr.plantenergy.uwa.edu.au"/>
</comment>